<organism>
    <name type="scientific">Pectobacterium parmentieri (strain WPP163)</name>
    <name type="common">Pectobacterium wasabiae (strain WPP163)</name>
    <dbReference type="NCBI Taxonomy" id="561231"/>
    <lineage>
        <taxon>Bacteria</taxon>
        <taxon>Pseudomonadati</taxon>
        <taxon>Pseudomonadota</taxon>
        <taxon>Gammaproteobacteria</taxon>
        <taxon>Enterobacterales</taxon>
        <taxon>Pectobacteriaceae</taxon>
        <taxon>Pectobacterium</taxon>
    </lineage>
</organism>
<reference key="1">
    <citation type="submission" date="2009-10" db="EMBL/GenBank/DDBJ databases">
        <title>Complete sequence of Pectobacterium wasabiae WPP163.</title>
        <authorList>
            <consortium name="US DOE Joint Genome Institute"/>
            <person name="Lucas S."/>
            <person name="Copeland A."/>
            <person name="Lapidus A."/>
            <person name="Glavina del Rio T."/>
            <person name="Tice H."/>
            <person name="Bruce D."/>
            <person name="Goodwin L."/>
            <person name="Pitluck S."/>
            <person name="Chertkov O."/>
            <person name="Brettin T."/>
            <person name="Detter J.C."/>
            <person name="Han C."/>
            <person name="Larimer F."/>
            <person name="Land M."/>
            <person name="Hauser L."/>
            <person name="Kyrpides N."/>
            <person name="Ovchinnikova G."/>
            <person name="Balakrishnan V."/>
            <person name="Glasner J."/>
            <person name="Perna N.T."/>
        </authorList>
    </citation>
    <scope>NUCLEOTIDE SEQUENCE [LARGE SCALE GENOMIC DNA]</scope>
    <source>
        <strain>WPP163</strain>
    </source>
</reference>
<name>PAGP_PECPW</name>
<evidence type="ECO:0000255" key="1">
    <source>
        <dbReference type="HAMAP-Rule" id="MF_00837"/>
    </source>
</evidence>
<feature type="signal peptide" evidence="1">
    <location>
        <begin position="1"/>
        <end position="24"/>
    </location>
</feature>
<feature type="chain" id="PRO_0000414467" description="Lipid A acyltransferase PagP">
    <location>
        <begin position="25"/>
        <end position="209"/>
    </location>
</feature>
<feature type="active site" evidence="1">
    <location>
        <position position="81"/>
    </location>
</feature>
<feature type="active site" evidence="1">
    <location>
        <position position="124"/>
    </location>
</feature>
<feature type="active site" evidence="1">
    <location>
        <position position="125"/>
    </location>
</feature>
<feature type="site" description="Role in lipopolysaccharide recognition" evidence="1">
    <location>
        <position position="90"/>
    </location>
</feature>
<feature type="site" description="Role in the phospholipid gating" evidence="1">
    <location>
        <position position="195"/>
    </location>
</feature>
<proteinExistence type="inferred from homology"/>
<accession>D0KD36</accession>
<dbReference type="EC" id="2.3.1.251" evidence="1"/>
<dbReference type="EMBL" id="CP001790">
    <property type="protein sequence ID" value="ACX90052.1"/>
    <property type="molecule type" value="Genomic_DNA"/>
</dbReference>
<dbReference type="RefSeq" id="WP_014701937.1">
    <property type="nucleotide sequence ID" value="NC_013421.1"/>
</dbReference>
<dbReference type="SMR" id="D0KD36"/>
<dbReference type="GeneID" id="45851677"/>
<dbReference type="KEGG" id="pwa:Pecwa_4360"/>
<dbReference type="eggNOG" id="ENOG502Z7SY">
    <property type="taxonomic scope" value="Bacteria"/>
</dbReference>
<dbReference type="HOGENOM" id="CLU_104099_0_0_6"/>
<dbReference type="GO" id="GO:0009279">
    <property type="term" value="C:cell outer membrane"/>
    <property type="evidence" value="ECO:0007669"/>
    <property type="project" value="UniProtKB-SubCell"/>
</dbReference>
<dbReference type="GO" id="GO:0016746">
    <property type="term" value="F:acyltransferase activity"/>
    <property type="evidence" value="ECO:0007669"/>
    <property type="project" value="UniProtKB-UniRule"/>
</dbReference>
<dbReference type="GO" id="GO:0009245">
    <property type="term" value="P:lipid A biosynthetic process"/>
    <property type="evidence" value="ECO:0007669"/>
    <property type="project" value="UniProtKB-UniRule"/>
</dbReference>
<dbReference type="FunFam" id="2.40.160.20:FF:000002">
    <property type="entry name" value="Lipid A palmitoyltransferase PagP"/>
    <property type="match status" value="1"/>
</dbReference>
<dbReference type="Gene3D" id="2.40.160.20">
    <property type="match status" value="1"/>
</dbReference>
<dbReference type="HAMAP" id="MF_00837">
    <property type="entry name" value="PagP_transferase"/>
    <property type="match status" value="1"/>
</dbReference>
<dbReference type="InterPro" id="IPR009746">
    <property type="entry name" value="LipidA_acyl_PagP"/>
</dbReference>
<dbReference type="InterPro" id="IPR011250">
    <property type="entry name" value="OMP/PagP_b-brl"/>
</dbReference>
<dbReference type="NCBIfam" id="NF008271">
    <property type="entry name" value="PRK11045.1"/>
    <property type="match status" value="1"/>
</dbReference>
<dbReference type="Pfam" id="PF07017">
    <property type="entry name" value="PagP"/>
    <property type="match status" value="1"/>
</dbReference>
<dbReference type="SUPFAM" id="SSF56925">
    <property type="entry name" value="OMPA-like"/>
    <property type="match status" value="1"/>
</dbReference>
<comment type="function">
    <text evidence="1">Transfers a fatty acid residue from the sn-1 position of a phospholipid to the N-linked hydroxyfatty acid chain on the proximal unit of lipid A or its precursors.</text>
</comment>
<comment type="catalytic activity">
    <reaction evidence="1">
        <text>a lipid A + a 1,2-diacyl-sn-glycero-3-phosphocholine = a hepta-acyl lipid A + a 2-acyl-sn-glycero-3-phosphocholine</text>
        <dbReference type="Rhea" id="RHEA:74275"/>
        <dbReference type="ChEBI" id="CHEBI:57643"/>
        <dbReference type="ChEBI" id="CHEBI:57875"/>
        <dbReference type="ChEBI" id="CHEBI:193141"/>
        <dbReference type="ChEBI" id="CHEBI:193142"/>
        <dbReference type="EC" id="2.3.1.251"/>
    </reaction>
</comment>
<comment type="catalytic activity">
    <reaction evidence="1">
        <text>a lipid IVA + a 1,2-diacyl-sn-glycero-3-phosphocholine = a lipid IVB + a 2-acyl-sn-glycero-3-phosphocholine</text>
        <dbReference type="Rhea" id="RHEA:74279"/>
        <dbReference type="ChEBI" id="CHEBI:57643"/>
        <dbReference type="ChEBI" id="CHEBI:57875"/>
        <dbReference type="ChEBI" id="CHEBI:176425"/>
        <dbReference type="ChEBI" id="CHEBI:193143"/>
        <dbReference type="EC" id="2.3.1.251"/>
    </reaction>
</comment>
<comment type="catalytic activity">
    <reaction evidence="1">
        <text>a lipid IIA + a 1,2-diacyl-sn-glycero-3-phosphocholine = a lipid IIB + a 2-acyl-sn-glycero-3-phosphocholine</text>
        <dbReference type="Rhea" id="RHEA:74283"/>
        <dbReference type="ChEBI" id="CHEBI:57643"/>
        <dbReference type="ChEBI" id="CHEBI:57875"/>
        <dbReference type="ChEBI" id="CHEBI:193144"/>
        <dbReference type="ChEBI" id="CHEBI:193145"/>
        <dbReference type="EC" id="2.3.1.251"/>
    </reaction>
</comment>
<comment type="subunit">
    <text evidence="1">Homodimer.</text>
</comment>
<comment type="subcellular location">
    <subcellularLocation>
        <location evidence="1">Cell outer membrane</location>
    </subcellularLocation>
</comment>
<comment type="similarity">
    <text evidence="1">Belongs to the lipid A palmitoyltransferase family.</text>
</comment>
<protein>
    <recommendedName>
        <fullName evidence="1">Lipid A acyltransferase PagP</fullName>
        <ecNumber evidence="1">2.3.1.251</ecNumber>
    </recommendedName>
    <alternativeName>
        <fullName evidence="1">Lipid A acylation protein</fullName>
    </alternativeName>
</protein>
<gene>
    <name evidence="1" type="primary">pagP</name>
    <name type="ordered locus">Pecwa_4360</name>
</gene>
<sequence>MHLKRALITLSLITLPIIPFSSYAVESINNTGSMESPASVAADSTSNKQDESWWQRSKHNLSATWNTSQSHDIYIPAITWHNRWTYDKEKTDKYNERPWGAGYGVSRLDQDGDWHGLYIMAFKDSFNKWEPIGGYGYEKRWRPTHDQDFQLGLGFTAGFTMRDNWNYIPIPVLLPLASISYSKLSFQATYIPGTYNNGNVFFAWFRWQI</sequence>
<keyword id="KW-0012">Acyltransferase</keyword>
<keyword id="KW-0998">Cell outer membrane</keyword>
<keyword id="KW-0472">Membrane</keyword>
<keyword id="KW-0732">Signal</keyword>
<keyword id="KW-0808">Transferase</keyword>